<comment type="function">
    <text evidence="1">Bifunctional enzyme that catalyzes the oxidative decarboxylation of UDP-glucuronic acid (UDP-GlcUA) to UDP-4-keto-arabinose (UDP-Ara4O) and the addition of a formyl group to UDP-4-amino-4-deoxy-L-arabinose (UDP-L-Ara4N) to form UDP-L-4-formamido-arabinose (UDP-L-Ara4FN). The modified arabinose is attached to lipid A and is required for resistance to polymyxin and cationic antimicrobial peptides.</text>
</comment>
<comment type="catalytic activity">
    <reaction evidence="1">
        <text>UDP-alpha-D-glucuronate + NAD(+) = UDP-beta-L-threo-pentopyranos-4-ulose + CO2 + NADH</text>
        <dbReference type="Rhea" id="RHEA:24702"/>
        <dbReference type="ChEBI" id="CHEBI:16526"/>
        <dbReference type="ChEBI" id="CHEBI:57540"/>
        <dbReference type="ChEBI" id="CHEBI:57945"/>
        <dbReference type="ChEBI" id="CHEBI:58052"/>
        <dbReference type="ChEBI" id="CHEBI:58710"/>
        <dbReference type="EC" id="1.1.1.305"/>
    </reaction>
</comment>
<comment type="catalytic activity">
    <reaction evidence="1">
        <text>UDP-4-amino-4-deoxy-beta-L-arabinose + (6R)-10-formyltetrahydrofolate = UDP-4-deoxy-4-formamido-beta-L-arabinose + (6S)-5,6,7,8-tetrahydrofolate + H(+)</text>
        <dbReference type="Rhea" id="RHEA:24706"/>
        <dbReference type="ChEBI" id="CHEBI:15378"/>
        <dbReference type="ChEBI" id="CHEBI:57453"/>
        <dbReference type="ChEBI" id="CHEBI:58708"/>
        <dbReference type="ChEBI" id="CHEBI:58709"/>
        <dbReference type="ChEBI" id="CHEBI:195366"/>
        <dbReference type="EC" id="2.1.2.13"/>
    </reaction>
</comment>
<comment type="pathway">
    <text evidence="1">Nucleotide-sugar biosynthesis; UDP-4-deoxy-4-formamido-beta-L-arabinose biosynthesis; UDP-4-deoxy-4-formamido-beta-L-arabinose from UDP-alpha-D-glucuronate: step 1/3.</text>
</comment>
<comment type="pathway">
    <text evidence="1">Nucleotide-sugar biosynthesis; UDP-4-deoxy-4-formamido-beta-L-arabinose biosynthesis; UDP-4-deoxy-4-formamido-beta-L-arabinose from UDP-alpha-D-glucuronate: step 3/3.</text>
</comment>
<comment type="pathway">
    <text evidence="1">Bacterial outer membrane biogenesis; lipopolysaccharide biosynthesis.</text>
</comment>
<comment type="subunit">
    <text evidence="1">Homohexamer, formed by a dimer of trimers.</text>
</comment>
<comment type="similarity">
    <text evidence="1">In the N-terminal section; belongs to the Fmt family. UDP-L-Ara4N formyltransferase subfamily.</text>
</comment>
<comment type="similarity">
    <text evidence="1">In the C-terminal section; belongs to the NAD(P)-dependent epimerase/dehydratase family. UDP-glucuronic acid decarboxylase subfamily.</text>
</comment>
<organism>
    <name type="scientific">Salmonella paratyphi C (strain RKS4594)</name>
    <dbReference type="NCBI Taxonomy" id="476213"/>
    <lineage>
        <taxon>Bacteria</taxon>
        <taxon>Pseudomonadati</taxon>
        <taxon>Pseudomonadota</taxon>
        <taxon>Gammaproteobacteria</taxon>
        <taxon>Enterobacterales</taxon>
        <taxon>Enterobacteriaceae</taxon>
        <taxon>Salmonella</taxon>
    </lineage>
</organism>
<dbReference type="EC" id="2.1.2.13" evidence="1"/>
<dbReference type="EC" id="1.1.1.305" evidence="1"/>
<dbReference type="EMBL" id="CP000857">
    <property type="protein sequence ID" value="ACN45573.1"/>
    <property type="molecule type" value="Genomic_DNA"/>
</dbReference>
<dbReference type="RefSeq" id="WP_000648773.1">
    <property type="nucleotide sequence ID" value="NC_012125.1"/>
</dbReference>
<dbReference type="SMR" id="C0Q069"/>
<dbReference type="KEGG" id="sei:SPC_1412"/>
<dbReference type="HOGENOM" id="CLU_007383_23_2_6"/>
<dbReference type="UniPathway" id="UPA00030"/>
<dbReference type="UniPathway" id="UPA00032">
    <property type="reaction ID" value="UER00492"/>
</dbReference>
<dbReference type="UniPathway" id="UPA00032">
    <property type="reaction ID" value="UER00494"/>
</dbReference>
<dbReference type="Proteomes" id="UP000001599">
    <property type="component" value="Chromosome"/>
</dbReference>
<dbReference type="GO" id="GO:0016020">
    <property type="term" value="C:membrane"/>
    <property type="evidence" value="ECO:0007669"/>
    <property type="project" value="GOC"/>
</dbReference>
<dbReference type="GO" id="GO:0016831">
    <property type="term" value="F:carboxy-lyase activity"/>
    <property type="evidence" value="ECO:0007669"/>
    <property type="project" value="InterPro"/>
</dbReference>
<dbReference type="GO" id="GO:0099619">
    <property type="term" value="F:UDP-4-amino-4-deoxy-L-arabinose formyltransferase activity"/>
    <property type="evidence" value="ECO:0007669"/>
    <property type="project" value="UniProtKB-EC"/>
</dbReference>
<dbReference type="GO" id="GO:0099618">
    <property type="term" value="F:UDP-glucuronate dehydrogenase activity"/>
    <property type="evidence" value="ECO:0007669"/>
    <property type="project" value="UniProtKB-EC"/>
</dbReference>
<dbReference type="GO" id="GO:0009245">
    <property type="term" value="P:lipid A biosynthetic process"/>
    <property type="evidence" value="ECO:0007669"/>
    <property type="project" value="UniProtKB-KW"/>
</dbReference>
<dbReference type="GO" id="GO:0009103">
    <property type="term" value="P:lipopolysaccharide biosynthetic process"/>
    <property type="evidence" value="ECO:0007669"/>
    <property type="project" value="UniProtKB-UniRule"/>
</dbReference>
<dbReference type="GO" id="GO:0046677">
    <property type="term" value="P:response to antibiotic"/>
    <property type="evidence" value="ECO:0007669"/>
    <property type="project" value="UniProtKB-KW"/>
</dbReference>
<dbReference type="CDD" id="cd08702">
    <property type="entry name" value="Arna_FMT_C"/>
    <property type="match status" value="1"/>
</dbReference>
<dbReference type="CDD" id="cd05257">
    <property type="entry name" value="Arna_like_SDR_e"/>
    <property type="match status" value="1"/>
</dbReference>
<dbReference type="FunFam" id="3.40.50.720:FF:000197">
    <property type="entry name" value="Bifunctional polymyxin resistance protein ArnA"/>
    <property type="match status" value="1"/>
</dbReference>
<dbReference type="Gene3D" id="3.40.50.12230">
    <property type="match status" value="1"/>
</dbReference>
<dbReference type="Gene3D" id="3.40.50.720">
    <property type="entry name" value="NAD(P)-binding Rossmann-like Domain"/>
    <property type="match status" value="1"/>
</dbReference>
<dbReference type="HAMAP" id="MF_01166">
    <property type="entry name" value="ArnA"/>
    <property type="match status" value="1"/>
</dbReference>
<dbReference type="InterPro" id="IPR045869">
    <property type="entry name" value="Arna-like_SDR_e"/>
</dbReference>
<dbReference type="InterPro" id="IPR021168">
    <property type="entry name" value="Bifun_polymyxin_resist_ArnA"/>
</dbReference>
<dbReference type="InterPro" id="IPR001509">
    <property type="entry name" value="Epimerase_deHydtase"/>
</dbReference>
<dbReference type="InterPro" id="IPR005793">
    <property type="entry name" value="Formyl_trans_C"/>
</dbReference>
<dbReference type="InterPro" id="IPR002376">
    <property type="entry name" value="Formyl_transf_N"/>
</dbReference>
<dbReference type="InterPro" id="IPR036477">
    <property type="entry name" value="Formyl_transf_N_sf"/>
</dbReference>
<dbReference type="InterPro" id="IPR011034">
    <property type="entry name" value="Formyl_transferase-like_C_sf"/>
</dbReference>
<dbReference type="InterPro" id="IPR050177">
    <property type="entry name" value="Lipid_A_modif_metabolic_enz"/>
</dbReference>
<dbReference type="InterPro" id="IPR036291">
    <property type="entry name" value="NAD(P)-bd_dom_sf"/>
</dbReference>
<dbReference type="NCBIfam" id="NF005414">
    <property type="entry name" value="PRK06988.1"/>
    <property type="match status" value="1"/>
</dbReference>
<dbReference type="NCBIfam" id="NF005998">
    <property type="entry name" value="PRK08125.1"/>
    <property type="match status" value="1"/>
</dbReference>
<dbReference type="NCBIfam" id="NF008872">
    <property type="entry name" value="PRK11908.1"/>
    <property type="match status" value="1"/>
</dbReference>
<dbReference type="PANTHER" id="PTHR43245">
    <property type="entry name" value="BIFUNCTIONAL POLYMYXIN RESISTANCE PROTEIN ARNA"/>
    <property type="match status" value="1"/>
</dbReference>
<dbReference type="PANTHER" id="PTHR43245:SF13">
    <property type="entry name" value="UDP-D-APIOSE_UDP-D-XYLOSE SYNTHASE 2"/>
    <property type="match status" value="1"/>
</dbReference>
<dbReference type="Pfam" id="PF01370">
    <property type="entry name" value="Epimerase"/>
    <property type="match status" value="1"/>
</dbReference>
<dbReference type="Pfam" id="PF02911">
    <property type="entry name" value="Formyl_trans_C"/>
    <property type="match status" value="1"/>
</dbReference>
<dbReference type="Pfam" id="PF00551">
    <property type="entry name" value="Formyl_trans_N"/>
    <property type="match status" value="1"/>
</dbReference>
<dbReference type="PIRSF" id="PIRSF036506">
    <property type="entry name" value="Bifun_polymyxin_resist_ArnA"/>
    <property type="match status" value="1"/>
</dbReference>
<dbReference type="SUPFAM" id="SSF50486">
    <property type="entry name" value="FMT C-terminal domain-like"/>
    <property type="match status" value="1"/>
</dbReference>
<dbReference type="SUPFAM" id="SSF53328">
    <property type="entry name" value="Formyltransferase"/>
    <property type="match status" value="1"/>
</dbReference>
<dbReference type="SUPFAM" id="SSF51735">
    <property type="entry name" value="NAD(P)-binding Rossmann-fold domains"/>
    <property type="match status" value="1"/>
</dbReference>
<keyword id="KW-0046">Antibiotic resistance</keyword>
<keyword id="KW-0441">Lipid A biosynthesis</keyword>
<keyword id="KW-0444">Lipid biosynthesis</keyword>
<keyword id="KW-0443">Lipid metabolism</keyword>
<keyword id="KW-0448">Lipopolysaccharide biosynthesis</keyword>
<keyword id="KW-0511">Multifunctional enzyme</keyword>
<keyword id="KW-0520">NAD</keyword>
<keyword id="KW-0560">Oxidoreductase</keyword>
<keyword id="KW-0808">Transferase</keyword>
<name>ARNA_SALPC</name>
<protein>
    <recommendedName>
        <fullName evidence="1">Bifunctional polymyxin resistance protein ArnA</fullName>
    </recommendedName>
    <domain>
        <recommendedName>
            <fullName evidence="1">UDP-4-amino-4-deoxy-L-arabinose formyltransferase</fullName>
            <ecNumber evidence="1">2.1.2.13</ecNumber>
        </recommendedName>
        <alternativeName>
            <fullName evidence="1">ArnAFT</fullName>
        </alternativeName>
        <alternativeName>
            <fullName evidence="1">UDP-L-Ara4N formyltransferase</fullName>
        </alternativeName>
    </domain>
    <domain>
        <recommendedName>
            <fullName evidence="1">UDP-glucuronic acid oxidase, UDP-4-keto-hexauronic acid decarboxylating</fullName>
            <ecNumber evidence="1">1.1.1.305</ecNumber>
        </recommendedName>
        <alternativeName>
            <fullName evidence="1">ArnADH</fullName>
        </alternativeName>
        <alternativeName>
            <fullName evidence="1">UDP-GlcUA decarboxylase</fullName>
        </alternativeName>
        <alternativeName>
            <fullName evidence="1">UDP-glucuronic acid dehydrogenase</fullName>
        </alternativeName>
    </domain>
</protein>
<proteinExistence type="inferred from homology"/>
<sequence>MKAVIFAYHDMGCQGVQAVLDAGYEIAAIFTHADNPAENTFFGSVSRLAAGLGIPVYAPDNVNHPIWVDRIAELAPDIIFSFYYRNLLSEEILHLAPAGAFNLHGSLLPAYRGRAPLNWVLVNGESETGVTLHRMVKRADAGEIVASQRVAIAQDDVALTLHHKLCQAARQLLNSILPTMKCGDIPSVPQRESDATYYGRRRPEDGLIDWHKPVSTVHNLVRAVAAPWPGAFSYNGSQKFTIWSSRICPDAQGVLPGSVISVSPLRVACADGALEIITGQAGDGITVQGSQLAQTLGLVAGARLNRPPATSGKRRIRVLILGVNGFIGNHLTERLLNEENYEVYGMDIGSNAISRFLLHPRFHFVEGDISIHSEWIEYHVKKCDVVLPLVAIATPIEYTRNPLRVFELDFEENLRIIRYCVKYRKRVVFPSTSEVYGMCTDASFDEDKSNLIVGPVNKPRWIYSVSKQLLDRVIWAYGEKEGLRFTLFRPFNWMGPRLDSLNAARIGSSRAITQLILNLVEGTPIKLIDGGQQKRCFTDIRDGIEALFRIIVNEGDRCDGKIINIGNPDNEASIQELATLLLDSFDKHPLRCHFPPFAGFQVVESRSYYGKGYQDVAHRKPSIDNARRCLGWEPSIAMRDTVEETLDFFLRSVDVAERAS</sequence>
<evidence type="ECO:0000255" key="1">
    <source>
        <dbReference type="HAMAP-Rule" id="MF_01166"/>
    </source>
</evidence>
<gene>
    <name evidence="1" type="primary">arnA</name>
    <name type="ordered locus">SPC_1412</name>
</gene>
<accession>C0Q069</accession>
<feature type="chain" id="PRO_0000379989" description="Bifunctional polymyxin resistance protein ArnA">
    <location>
        <begin position="1"/>
        <end position="660"/>
    </location>
</feature>
<feature type="region of interest" description="Formyltransferase ArnAFT">
    <location>
        <begin position="1"/>
        <end position="304"/>
    </location>
</feature>
<feature type="region of interest" description="Dehydrogenase ArnADH">
    <location>
        <begin position="314"/>
        <end position="660"/>
    </location>
</feature>
<feature type="active site" description="Proton donor; for formyltransferase activity" evidence="1">
    <location>
        <position position="104"/>
    </location>
</feature>
<feature type="active site" description="Proton acceptor; for decarboxylase activity" evidence="1">
    <location>
        <position position="434"/>
    </location>
</feature>
<feature type="active site" description="Proton donor; for decarboxylase activity" evidence="1">
    <location>
        <position position="619"/>
    </location>
</feature>
<feature type="binding site" evidence="1">
    <location>
        <position position="114"/>
    </location>
    <ligand>
        <name>(6R)-10-formyltetrahydrofolate</name>
        <dbReference type="ChEBI" id="CHEBI:195366"/>
    </ligand>
</feature>
<feature type="binding site" evidence="1">
    <location>
        <begin position="136"/>
        <end position="140"/>
    </location>
    <ligand>
        <name>(6R)-10-formyltetrahydrofolate</name>
        <dbReference type="ChEBI" id="CHEBI:195366"/>
    </ligand>
</feature>
<feature type="binding site" evidence="1">
    <location>
        <position position="347"/>
    </location>
    <ligand>
        <name>NAD(+)</name>
        <dbReference type="ChEBI" id="CHEBI:57540"/>
    </ligand>
</feature>
<feature type="binding site" evidence="1">
    <location>
        <begin position="368"/>
        <end position="369"/>
    </location>
    <ligand>
        <name>NAD(+)</name>
        <dbReference type="ChEBI" id="CHEBI:57540"/>
    </ligand>
</feature>
<feature type="binding site" evidence="1">
    <location>
        <position position="393"/>
    </location>
    <ligand>
        <name>UDP-alpha-D-glucuronate</name>
        <dbReference type="ChEBI" id="CHEBI:58052"/>
    </ligand>
</feature>
<feature type="binding site" evidence="1">
    <location>
        <position position="398"/>
    </location>
    <ligand>
        <name>UDP-alpha-D-glucuronate</name>
        <dbReference type="ChEBI" id="CHEBI:58052"/>
    </ligand>
</feature>
<feature type="binding site" evidence="1">
    <location>
        <begin position="432"/>
        <end position="433"/>
    </location>
    <ligand>
        <name>UDP-alpha-D-glucuronate</name>
        <dbReference type="ChEBI" id="CHEBI:58052"/>
    </ligand>
</feature>
<feature type="binding site" evidence="1">
    <location>
        <position position="460"/>
    </location>
    <ligand>
        <name>UDP-alpha-D-glucuronate</name>
        <dbReference type="ChEBI" id="CHEBI:58052"/>
    </ligand>
</feature>
<feature type="binding site" evidence="1">
    <location>
        <position position="492"/>
    </location>
    <ligand>
        <name>UDP-alpha-D-glucuronate</name>
        <dbReference type="ChEBI" id="CHEBI:58052"/>
    </ligand>
</feature>
<feature type="binding site" evidence="1">
    <location>
        <begin position="526"/>
        <end position="535"/>
    </location>
    <ligand>
        <name>UDP-alpha-D-glucuronate</name>
        <dbReference type="ChEBI" id="CHEBI:58052"/>
    </ligand>
</feature>
<feature type="binding site" evidence="1">
    <location>
        <position position="613"/>
    </location>
    <ligand>
        <name>UDP-alpha-D-glucuronate</name>
        <dbReference type="ChEBI" id="CHEBI:58052"/>
    </ligand>
</feature>
<feature type="site" description="Transition state stabilizer" evidence="1">
    <location>
        <position position="102"/>
    </location>
</feature>
<feature type="site" description="Raises pKa of active site His" evidence="1">
    <location>
        <position position="140"/>
    </location>
</feature>
<reference key="1">
    <citation type="journal article" date="2009" name="PLoS ONE">
        <title>Salmonella paratyphi C: genetic divergence from Salmonella choleraesuis and pathogenic convergence with Salmonella typhi.</title>
        <authorList>
            <person name="Liu W.-Q."/>
            <person name="Feng Y."/>
            <person name="Wang Y."/>
            <person name="Zou Q.-H."/>
            <person name="Chen F."/>
            <person name="Guo J.-T."/>
            <person name="Peng Y.-H."/>
            <person name="Jin Y."/>
            <person name="Li Y.-G."/>
            <person name="Hu S.-N."/>
            <person name="Johnston R.N."/>
            <person name="Liu G.-R."/>
            <person name="Liu S.-L."/>
        </authorList>
    </citation>
    <scope>NUCLEOTIDE SEQUENCE [LARGE SCALE GENOMIC DNA]</scope>
    <source>
        <strain>RKS4594</strain>
    </source>
</reference>